<proteinExistence type="inferred from homology"/>
<evidence type="ECO:0000255" key="1">
    <source>
        <dbReference type="HAMAP-Rule" id="MF_00141"/>
    </source>
</evidence>
<reference key="1">
    <citation type="journal article" date="2002" name="Science">
        <title>50 million years of genomic stasis in endosymbiotic bacteria.</title>
        <authorList>
            <person name="Tamas I."/>
            <person name="Klasson L."/>
            <person name="Canbaeck B."/>
            <person name="Naeslund A.K."/>
            <person name="Eriksson A.-S."/>
            <person name="Wernegreen J.J."/>
            <person name="Sandstroem J.P."/>
            <person name="Moran N.A."/>
            <person name="Andersson S.G.E."/>
        </authorList>
    </citation>
    <scope>NUCLEOTIDE SEQUENCE [LARGE SCALE GENOMIC DNA]</scope>
    <source>
        <strain>Sg</strain>
    </source>
</reference>
<keyword id="KW-0963">Cytoplasm</keyword>
<keyword id="KW-0251">Elongation factor</keyword>
<keyword id="KW-0379">Hydroxylation</keyword>
<keyword id="KW-0648">Protein biosynthesis</keyword>
<comment type="function">
    <text evidence="1">Involved in peptide bond synthesis. Alleviates ribosome stalling that occurs when 3 or more consecutive Pro residues or the sequence PPG is present in a protein, possibly by augmenting the peptidyl transferase activity of the ribosome. Modification of Lys-34 is required for alleviation.</text>
</comment>
<comment type="pathway">
    <text evidence="1">Protein biosynthesis; polypeptide chain elongation.</text>
</comment>
<comment type="subcellular location">
    <subcellularLocation>
        <location evidence="1">Cytoplasm</location>
    </subcellularLocation>
</comment>
<comment type="PTM">
    <text evidence="1">May be beta-lysylated on the epsilon-amino group of Lys-34 by the combined action of EpmA and EpmB, and then hydroxylated on the C5 position of the same residue by EpmC (if this protein is present). Lysylation is critical for the stimulatory effect of EF-P on peptide-bond formation. The lysylation moiety may extend toward the peptidyltransferase center and stabilize the terminal 3-CCA end of the tRNA. Hydroxylation of the C5 position on Lys-34 may allow additional potential stabilizing hydrogen-bond interactions with the P-tRNA.</text>
</comment>
<comment type="similarity">
    <text evidence="1">Belongs to the elongation factor P family.</text>
</comment>
<feature type="chain" id="PRO_0000094216" description="Elongation factor P">
    <location>
        <begin position="1"/>
        <end position="187"/>
    </location>
</feature>
<feature type="modified residue" description="N6-(3,6-diaminohexanoyl)-5-hydroxylysine" evidence="1">
    <location>
        <position position="34"/>
    </location>
</feature>
<gene>
    <name evidence="1" type="primary">efp</name>
    <name type="ordered locus">BUsg_021</name>
</gene>
<dbReference type="EMBL" id="AE013218">
    <property type="protein sequence ID" value="AAM67593.1"/>
    <property type="molecule type" value="Genomic_DNA"/>
</dbReference>
<dbReference type="RefSeq" id="WP_011053559.1">
    <property type="nucleotide sequence ID" value="NC_004061.1"/>
</dbReference>
<dbReference type="SMR" id="Q8KA80"/>
<dbReference type="STRING" id="198804.BUsg_021"/>
<dbReference type="GeneID" id="93003484"/>
<dbReference type="KEGG" id="bas:BUsg_021"/>
<dbReference type="eggNOG" id="COG0231">
    <property type="taxonomic scope" value="Bacteria"/>
</dbReference>
<dbReference type="HOGENOM" id="CLU_074944_0_0_6"/>
<dbReference type="UniPathway" id="UPA00345"/>
<dbReference type="Proteomes" id="UP000000416">
    <property type="component" value="Chromosome"/>
</dbReference>
<dbReference type="GO" id="GO:0005737">
    <property type="term" value="C:cytoplasm"/>
    <property type="evidence" value="ECO:0007669"/>
    <property type="project" value="UniProtKB-SubCell"/>
</dbReference>
<dbReference type="GO" id="GO:0003746">
    <property type="term" value="F:translation elongation factor activity"/>
    <property type="evidence" value="ECO:0007669"/>
    <property type="project" value="UniProtKB-UniRule"/>
</dbReference>
<dbReference type="GO" id="GO:0043043">
    <property type="term" value="P:peptide biosynthetic process"/>
    <property type="evidence" value="ECO:0007669"/>
    <property type="project" value="InterPro"/>
</dbReference>
<dbReference type="CDD" id="cd04470">
    <property type="entry name" value="S1_EF-P_repeat_1"/>
    <property type="match status" value="1"/>
</dbReference>
<dbReference type="CDD" id="cd05794">
    <property type="entry name" value="S1_EF-P_repeat_2"/>
    <property type="match status" value="1"/>
</dbReference>
<dbReference type="FunFam" id="2.30.30.30:FF:000003">
    <property type="entry name" value="Elongation factor P"/>
    <property type="match status" value="1"/>
</dbReference>
<dbReference type="FunFam" id="2.40.50.140:FF:000004">
    <property type="entry name" value="Elongation factor P"/>
    <property type="match status" value="1"/>
</dbReference>
<dbReference type="FunFam" id="2.40.50.140:FF:000009">
    <property type="entry name" value="Elongation factor P"/>
    <property type="match status" value="1"/>
</dbReference>
<dbReference type="Gene3D" id="2.30.30.30">
    <property type="match status" value="1"/>
</dbReference>
<dbReference type="Gene3D" id="2.40.50.140">
    <property type="entry name" value="Nucleic acid-binding proteins"/>
    <property type="match status" value="2"/>
</dbReference>
<dbReference type="HAMAP" id="MF_00141">
    <property type="entry name" value="EF_P"/>
    <property type="match status" value="1"/>
</dbReference>
<dbReference type="InterPro" id="IPR015365">
    <property type="entry name" value="Elong-fact-P_C"/>
</dbReference>
<dbReference type="InterPro" id="IPR012340">
    <property type="entry name" value="NA-bd_OB-fold"/>
</dbReference>
<dbReference type="InterPro" id="IPR014722">
    <property type="entry name" value="Rib_uL2_dom2"/>
</dbReference>
<dbReference type="InterPro" id="IPR020599">
    <property type="entry name" value="Transl_elong_fac_P/YeiP"/>
</dbReference>
<dbReference type="InterPro" id="IPR013185">
    <property type="entry name" value="Transl_elong_KOW-like"/>
</dbReference>
<dbReference type="InterPro" id="IPR001059">
    <property type="entry name" value="Transl_elong_P/YeiP_cen"/>
</dbReference>
<dbReference type="InterPro" id="IPR013852">
    <property type="entry name" value="Transl_elong_P/YeiP_CS"/>
</dbReference>
<dbReference type="InterPro" id="IPR011768">
    <property type="entry name" value="Transl_elongation_fac_P"/>
</dbReference>
<dbReference type="InterPro" id="IPR008991">
    <property type="entry name" value="Translation_prot_SH3-like_sf"/>
</dbReference>
<dbReference type="NCBIfam" id="TIGR00038">
    <property type="entry name" value="efp"/>
    <property type="match status" value="1"/>
</dbReference>
<dbReference type="NCBIfam" id="NF001810">
    <property type="entry name" value="PRK00529.1"/>
    <property type="match status" value="1"/>
</dbReference>
<dbReference type="PANTHER" id="PTHR30053">
    <property type="entry name" value="ELONGATION FACTOR P"/>
    <property type="match status" value="1"/>
</dbReference>
<dbReference type="PANTHER" id="PTHR30053:SF12">
    <property type="entry name" value="ELONGATION FACTOR P (EF-P) FAMILY PROTEIN"/>
    <property type="match status" value="1"/>
</dbReference>
<dbReference type="Pfam" id="PF01132">
    <property type="entry name" value="EFP"/>
    <property type="match status" value="1"/>
</dbReference>
<dbReference type="Pfam" id="PF08207">
    <property type="entry name" value="EFP_N"/>
    <property type="match status" value="1"/>
</dbReference>
<dbReference type="Pfam" id="PF09285">
    <property type="entry name" value="Elong-fact-P_C"/>
    <property type="match status" value="1"/>
</dbReference>
<dbReference type="PIRSF" id="PIRSF005901">
    <property type="entry name" value="EF-P"/>
    <property type="match status" value="1"/>
</dbReference>
<dbReference type="SMART" id="SM01185">
    <property type="entry name" value="EFP"/>
    <property type="match status" value="1"/>
</dbReference>
<dbReference type="SMART" id="SM00841">
    <property type="entry name" value="Elong-fact-P_C"/>
    <property type="match status" value="1"/>
</dbReference>
<dbReference type="SUPFAM" id="SSF50249">
    <property type="entry name" value="Nucleic acid-binding proteins"/>
    <property type="match status" value="2"/>
</dbReference>
<dbReference type="SUPFAM" id="SSF50104">
    <property type="entry name" value="Translation proteins SH3-like domain"/>
    <property type="match status" value="1"/>
</dbReference>
<dbReference type="PROSITE" id="PS01275">
    <property type="entry name" value="EFP"/>
    <property type="match status" value="1"/>
</dbReference>
<name>EFP_BUCAP</name>
<accession>Q8KA80</accession>
<sequence length="187" mass="21469">MRVYHSNNFRSGRKIIFEKEPCLIESSEFVKPGKGQSFVRVKLRKLLTKQLIEKTFKSTDSLEIADVSEYTLSYLYNDGHFWYFINNNFEELSVDKKIVGVNKKWLSEQDTCVITFWNNQAISITPNIFVELKVIDTEIALKSDTINTTTKLATLSTGAILKVPLFIQIGSLIKVDTRSGEYVSRIK</sequence>
<organism>
    <name type="scientific">Buchnera aphidicola subsp. Schizaphis graminum (strain Sg)</name>
    <dbReference type="NCBI Taxonomy" id="198804"/>
    <lineage>
        <taxon>Bacteria</taxon>
        <taxon>Pseudomonadati</taxon>
        <taxon>Pseudomonadota</taxon>
        <taxon>Gammaproteobacteria</taxon>
        <taxon>Enterobacterales</taxon>
        <taxon>Erwiniaceae</taxon>
        <taxon>Buchnera</taxon>
    </lineage>
</organism>
<protein>
    <recommendedName>
        <fullName evidence="1">Elongation factor P</fullName>
        <shortName evidence="1">EF-P</shortName>
    </recommendedName>
</protein>